<feature type="chain" id="PRO_0000176868" description="Small ribosomal subunit protein bS6">
    <location>
        <begin position="1"/>
        <end position="100"/>
    </location>
</feature>
<name>RS6_TROW8</name>
<reference key="1">
    <citation type="journal article" date="2003" name="Lancet">
        <title>Sequencing and analysis of the genome of the Whipple's disease bacterium Tropheryma whipplei.</title>
        <authorList>
            <person name="Bentley S.D."/>
            <person name="Maiwald M."/>
            <person name="Murphy L.D."/>
            <person name="Pallen M.J."/>
            <person name="Yeats C.A."/>
            <person name="Dover L.G."/>
            <person name="Norbertczak H.T."/>
            <person name="Besra G.S."/>
            <person name="Quail M.A."/>
            <person name="Harris D.E."/>
            <person name="von Herbay A."/>
            <person name="Goble A."/>
            <person name="Rutter S."/>
            <person name="Squares R."/>
            <person name="Squares S."/>
            <person name="Barrell B.G."/>
            <person name="Parkhill J."/>
            <person name="Relman D.A."/>
        </authorList>
    </citation>
    <scope>NUCLEOTIDE SEQUENCE [LARGE SCALE GENOMIC DNA]</scope>
    <source>
        <strain>TW08/27</strain>
    </source>
</reference>
<gene>
    <name evidence="1" type="primary">rpsF</name>
    <name type="ordered locus">TW117</name>
</gene>
<accession>Q83IC0</accession>
<dbReference type="EMBL" id="BX251410">
    <property type="protein sequence ID" value="CAD66800.1"/>
    <property type="molecule type" value="Genomic_DNA"/>
</dbReference>
<dbReference type="SMR" id="Q83IC0"/>
<dbReference type="KEGG" id="tws:TW117"/>
<dbReference type="HOGENOM" id="CLU_113441_5_3_11"/>
<dbReference type="GO" id="GO:1990904">
    <property type="term" value="C:ribonucleoprotein complex"/>
    <property type="evidence" value="ECO:0007669"/>
    <property type="project" value="UniProtKB-KW"/>
</dbReference>
<dbReference type="GO" id="GO:0005840">
    <property type="term" value="C:ribosome"/>
    <property type="evidence" value="ECO:0007669"/>
    <property type="project" value="UniProtKB-KW"/>
</dbReference>
<dbReference type="GO" id="GO:0019843">
    <property type="term" value="F:rRNA binding"/>
    <property type="evidence" value="ECO:0007669"/>
    <property type="project" value="UniProtKB-UniRule"/>
</dbReference>
<dbReference type="GO" id="GO:0003735">
    <property type="term" value="F:structural constituent of ribosome"/>
    <property type="evidence" value="ECO:0007669"/>
    <property type="project" value="InterPro"/>
</dbReference>
<dbReference type="GO" id="GO:0006412">
    <property type="term" value="P:translation"/>
    <property type="evidence" value="ECO:0007669"/>
    <property type="project" value="UniProtKB-UniRule"/>
</dbReference>
<dbReference type="CDD" id="cd00473">
    <property type="entry name" value="bS6"/>
    <property type="match status" value="1"/>
</dbReference>
<dbReference type="Gene3D" id="3.30.70.60">
    <property type="match status" value="1"/>
</dbReference>
<dbReference type="HAMAP" id="MF_00360">
    <property type="entry name" value="Ribosomal_bS6"/>
    <property type="match status" value="1"/>
</dbReference>
<dbReference type="InterPro" id="IPR000529">
    <property type="entry name" value="Ribosomal_bS6"/>
</dbReference>
<dbReference type="InterPro" id="IPR035980">
    <property type="entry name" value="Ribosomal_bS6_sf"/>
</dbReference>
<dbReference type="InterPro" id="IPR020814">
    <property type="entry name" value="Ribosomal_S6_plastid/chlpt"/>
</dbReference>
<dbReference type="InterPro" id="IPR014717">
    <property type="entry name" value="Transl_elong_EF1B/ribsomal_bS6"/>
</dbReference>
<dbReference type="Pfam" id="PF01250">
    <property type="entry name" value="Ribosomal_S6"/>
    <property type="match status" value="1"/>
</dbReference>
<dbReference type="SUPFAM" id="SSF54995">
    <property type="entry name" value="Ribosomal protein S6"/>
    <property type="match status" value="1"/>
</dbReference>
<keyword id="KW-0687">Ribonucleoprotein</keyword>
<keyword id="KW-0689">Ribosomal protein</keyword>
<keyword id="KW-0694">RNA-binding</keyword>
<keyword id="KW-0699">rRNA-binding</keyword>
<proteinExistence type="inferred from homology"/>
<comment type="function">
    <text evidence="1">Binds together with bS18 to 16S ribosomal RNA.</text>
</comment>
<comment type="similarity">
    <text evidence="1">Belongs to the bacterial ribosomal protein bS6 family.</text>
</comment>
<sequence length="100" mass="11166">MLGSPLREYELLVSLGSEFEPEAESRVRSLFTPVEPEGVTVKHLDVLGVRKFAYEIKGRNDGVCVVVRLLANAGSIAEIGRQMRLTEDVIRTKLLRVGRK</sequence>
<protein>
    <recommendedName>
        <fullName evidence="1">Small ribosomal subunit protein bS6</fullName>
    </recommendedName>
    <alternativeName>
        <fullName evidence="2">30S ribosomal protein S6</fullName>
    </alternativeName>
</protein>
<organism>
    <name type="scientific">Tropheryma whipplei (strain TW08/27)</name>
    <name type="common">Whipple's bacillus</name>
    <dbReference type="NCBI Taxonomy" id="218496"/>
    <lineage>
        <taxon>Bacteria</taxon>
        <taxon>Bacillati</taxon>
        <taxon>Actinomycetota</taxon>
        <taxon>Actinomycetes</taxon>
        <taxon>Micrococcales</taxon>
        <taxon>Tropherymataceae</taxon>
        <taxon>Tropheryma</taxon>
    </lineage>
</organism>
<evidence type="ECO:0000255" key="1">
    <source>
        <dbReference type="HAMAP-Rule" id="MF_00360"/>
    </source>
</evidence>
<evidence type="ECO:0000305" key="2"/>